<keyword id="KW-0131">Cell cycle</keyword>
<keyword id="KW-0132">Cell division</keyword>
<keyword id="KW-0997">Cell inner membrane</keyword>
<keyword id="KW-1003">Cell membrane</keyword>
<keyword id="KW-0133">Cell shape</keyword>
<keyword id="KW-0961">Cell wall biogenesis/degradation</keyword>
<keyword id="KW-0328">Glycosyltransferase</keyword>
<keyword id="KW-0472">Membrane</keyword>
<keyword id="KW-0573">Peptidoglycan synthesis</keyword>
<keyword id="KW-1185">Reference proteome</keyword>
<keyword id="KW-0808">Transferase</keyword>
<gene>
    <name evidence="1" type="primary">murG</name>
    <name type="ordered locus">PSHAa2504</name>
</gene>
<sequence length="358" mass="37869">MSKKCVVVAGGTGGHIFPGIAVADYLKQQGWQVSWIGTPDRMEATVVPKHNIDINFINVKGVRGNGIKRLIKAPFMVLNAILQARKVLKSEKPDVVLAMGGYVTGPTGIAAKSLGIPLVIHEQNAIAGMSNKWLAKFANRVLAAFPSAFATGQAELVGNPVRESVANIAVREVSSPINILVVGGSLGAQVLNTTLPAAFAELGNTNAISVWHQTGKGHLGSVEAAYKSHKFSTENTKVAEFIDDIDTAYGWADIVICRSGALTVSEIATAGKMAVFVPFPHAVDDHQTANAQYLVVANGALLMPQGQFNQQSIVALLSPYLAKPSLIKEMAANAKQQAILDATASVAMHCEQVTNKRA</sequence>
<protein>
    <recommendedName>
        <fullName evidence="1">UDP-N-acetylglucosamine--N-acetylmuramyl-(pentapeptide) pyrophosphoryl-undecaprenol N-acetylglucosamine transferase</fullName>
        <ecNumber evidence="1">2.4.1.227</ecNumber>
    </recommendedName>
    <alternativeName>
        <fullName evidence="1">Undecaprenyl-PP-MurNAc-pentapeptide-UDPGlcNAc GlcNAc transferase</fullName>
    </alternativeName>
</protein>
<reference key="1">
    <citation type="journal article" date="2005" name="Genome Res.">
        <title>Coping with cold: the genome of the versatile marine Antarctica bacterium Pseudoalteromonas haloplanktis TAC125.</title>
        <authorList>
            <person name="Medigue C."/>
            <person name="Krin E."/>
            <person name="Pascal G."/>
            <person name="Barbe V."/>
            <person name="Bernsel A."/>
            <person name="Bertin P.N."/>
            <person name="Cheung F."/>
            <person name="Cruveiller S."/>
            <person name="D'Amico S."/>
            <person name="Duilio A."/>
            <person name="Fang G."/>
            <person name="Feller G."/>
            <person name="Ho C."/>
            <person name="Mangenot S."/>
            <person name="Marino G."/>
            <person name="Nilsson J."/>
            <person name="Parrilli E."/>
            <person name="Rocha E.P.C."/>
            <person name="Rouy Z."/>
            <person name="Sekowska A."/>
            <person name="Tutino M.L."/>
            <person name="Vallenet D."/>
            <person name="von Heijne G."/>
            <person name="Danchin A."/>
        </authorList>
    </citation>
    <scope>NUCLEOTIDE SEQUENCE [LARGE SCALE GENOMIC DNA]</scope>
    <source>
        <strain>TAC 125</strain>
    </source>
</reference>
<feature type="chain" id="PRO_0000225081" description="UDP-N-acetylglucosamine--N-acetylmuramyl-(pentapeptide) pyrophosphoryl-undecaprenol N-acetylglucosamine transferase">
    <location>
        <begin position="1"/>
        <end position="358"/>
    </location>
</feature>
<feature type="binding site" evidence="1">
    <location>
        <begin position="12"/>
        <end position="14"/>
    </location>
    <ligand>
        <name>UDP-N-acetyl-alpha-D-glucosamine</name>
        <dbReference type="ChEBI" id="CHEBI:57705"/>
    </ligand>
</feature>
<feature type="binding site" evidence="1">
    <location>
        <position position="124"/>
    </location>
    <ligand>
        <name>UDP-N-acetyl-alpha-D-glucosamine</name>
        <dbReference type="ChEBI" id="CHEBI:57705"/>
    </ligand>
</feature>
<feature type="binding site" evidence="1">
    <location>
        <position position="162"/>
    </location>
    <ligand>
        <name>UDP-N-acetyl-alpha-D-glucosamine</name>
        <dbReference type="ChEBI" id="CHEBI:57705"/>
    </ligand>
</feature>
<feature type="binding site" evidence="1">
    <location>
        <position position="185"/>
    </location>
    <ligand>
        <name>UDP-N-acetyl-alpha-D-glucosamine</name>
        <dbReference type="ChEBI" id="CHEBI:57705"/>
    </ligand>
</feature>
<feature type="binding site" evidence="1">
    <location>
        <position position="242"/>
    </location>
    <ligand>
        <name>UDP-N-acetyl-alpha-D-glucosamine</name>
        <dbReference type="ChEBI" id="CHEBI:57705"/>
    </ligand>
</feature>
<feature type="binding site" evidence="1">
    <location>
        <begin position="261"/>
        <end position="266"/>
    </location>
    <ligand>
        <name>UDP-N-acetyl-alpha-D-glucosamine</name>
        <dbReference type="ChEBI" id="CHEBI:57705"/>
    </ligand>
</feature>
<feature type="binding site" evidence="1">
    <location>
        <position position="287"/>
    </location>
    <ligand>
        <name>UDP-N-acetyl-alpha-D-glucosamine</name>
        <dbReference type="ChEBI" id="CHEBI:57705"/>
    </ligand>
</feature>
<proteinExistence type="inferred from homology"/>
<evidence type="ECO:0000255" key="1">
    <source>
        <dbReference type="HAMAP-Rule" id="MF_00033"/>
    </source>
</evidence>
<accession>Q3IFY0</accession>
<comment type="function">
    <text evidence="1">Cell wall formation. Catalyzes the transfer of a GlcNAc subunit on undecaprenyl-pyrophosphoryl-MurNAc-pentapeptide (lipid intermediate I) to form undecaprenyl-pyrophosphoryl-MurNAc-(pentapeptide)GlcNAc (lipid intermediate II).</text>
</comment>
<comment type="catalytic activity">
    <reaction evidence="1">
        <text>di-trans,octa-cis-undecaprenyl diphospho-N-acetyl-alpha-D-muramoyl-L-alanyl-D-glutamyl-meso-2,6-diaminopimeloyl-D-alanyl-D-alanine + UDP-N-acetyl-alpha-D-glucosamine = di-trans,octa-cis-undecaprenyl diphospho-[N-acetyl-alpha-D-glucosaminyl-(1-&gt;4)]-N-acetyl-alpha-D-muramoyl-L-alanyl-D-glutamyl-meso-2,6-diaminopimeloyl-D-alanyl-D-alanine + UDP + H(+)</text>
        <dbReference type="Rhea" id="RHEA:31227"/>
        <dbReference type="ChEBI" id="CHEBI:15378"/>
        <dbReference type="ChEBI" id="CHEBI:57705"/>
        <dbReference type="ChEBI" id="CHEBI:58223"/>
        <dbReference type="ChEBI" id="CHEBI:61387"/>
        <dbReference type="ChEBI" id="CHEBI:61388"/>
        <dbReference type="EC" id="2.4.1.227"/>
    </reaction>
</comment>
<comment type="pathway">
    <text evidence="1">Cell wall biogenesis; peptidoglycan biosynthesis.</text>
</comment>
<comment type="subcellular location">
    <subcellularLocation>
        <location evidence="1">Cell inner membrane</location>
        <topology evidence="1">Peripheral membrane protein</topology>
        <orientation evidence="1">Cytoplasmic side</orientation>
    </subcellularLocation>
</comment>
<comment type="similarity">
    <text evidence="1">Belongs to the glycosyltransferase 28 family. MurG subfamily.</text>
</comment>
<dbReference type="EC" id="2.4.1.227" evidence="1"/>
<dbReference type="EMBL" id="CR954246">
    <property type="protein sequence ID" value="CAI87552.1"/>
    <property type="molecule type" value="Genomic_DNA"/>
</dbReference>
<dbReference type="SMR" id="Q3IFY0"/>
<dbReference type="STRING" id="326442.PSHAa2504"/>
<dbReference type="CAZy" id="GT28">
    <property type="family name" value="Glycosyltransferase Family 28"/>
</dbReference>
<dbReference type="KEGG" id="pha:PSHAa2504"/>
<dbReference type="PATRIC" id="fig|326442.8.peg.2414"/>
<dbReference type="eggNOG" id="COG0707">
    <property type="taxonomic scope" value="Bacteria"/>
</dbReference>
<dbReference type="HOGENOM" id="CLU_037404_2_0_6"/>
<dbReference type="BioCyc" id="PHAL326442:PSHA_RS12330-MONOMER"/>
<dbReference type="UniPathway" id="UPA00219"/>
<dbReference type="Proteomes" id="UP000006843">
    <property type="component" value="Chromosome I"/>
</dbReference>
<dbReference type="GO" id="GO:0005886">
    <property type="term" value="C:plasma membrane"/>
    <property type="evidence" value="ECO:0007669"/>
    <property type="project" value="UniProtKB-SubCell"/>
</dbReference>
<dbReference type="GO" id="GO:0051991">
    <property type="term" value="F:UDP-N-acetyl-D-glucosamine:N-acetylmuramoyl-L-alanyl-D-glutamyl-meso-2,6-diaminopimelyl-D-alanyl-D-alanine-diphosphoundecaprenol 4-beta-N-acetylglucosaminlytransferase activity"/>
    <property type="evidence" value="ECO:0007669"/>
    <property type="project" value="RHEA"/>
</dbReference>
<dbReference type="GO" id="GO:0050511">
    <property type="term" value="F:undecaprenyldiphospho-muramoylpentapeptide beta-N-acetylglucosaminyltransferase activity"/>
    <property type="evidence" value="ECO:0007669"/>
    <property type="project" value="UniProtKB-UniRule"/>
</dbReference>
<dbReference type="GO" id="GO:0005975">
    <property type="term" value="P:carbohydrate metabolic process"/>
    <property type="evidence" value="ECO:0007669"/>
    <property type="project" value="InterPro"/>
</dbReference>
<dbReference type="GO" id="GO:0051301">
    <property type="term" value="P:cell division"/>
    <property type="evidence" value="ECO:0007669"/>
    <property type="project" value="UniProtKB-KW"/>
</dbReference>
<dbReference type="GO" id="GO:0071555">
    <property type="term" value="P:cell wall organization"/>
    <property type="evidence" value="ECO:0007669"/>
    <property type="project" value="UniProtKB-KW"/>
</dbReference>
<dbReference type="GO" id="GO:0030259">
    <property type="term" value="P:lipid glycosylation"/>
    <property type="evidence" value="ECO:0007669"/>
    <property type="project" value="UniProtKB-UniRule"/>
</dbReference>
<dbReference type="GO" id="GO:0009252">
    <property type="term" value="P:peptidoglycan biosynthetic process"/>
    <property type="evidence" value="ECO:0007669"/>
    <property type="project" value="UniProtKB-UniRule"/>
</dbReference>
<dbReference type="GO" id="GO:0008360">
    <property type="term" value="P:regulation of cell shape"/>
    <property type="evidence" value="ECO:0007669"/>
    <property type="project" value="UniProtKB-KW"/>
</dbReference>
<dbReference type="CDD" id="cd03785">
    <property type="entry name" value="GT28_MurG"/>
    <property type="match status" value="1"/>
</dbReference>
<dbReference type="Gene3D" id="3.40.50.2000">
    <property type="entry name" value="Glycogen Phosphorylase B"/>
    <property type="match status" value="2"/>
</dbReference>
<dbReference type="HAMAP" id="MF_00033">
    <property type="entry name" value="MurG"/>
    <property type="match status" value="1"/>
</dbReference>
<dbReference type="InterPro" id="IPR006009">
    <property type="entry name" value="GlcNAc_MurG"/>
</dbReference>
<dbReference type="InterPro" id="IPR007235">
    <property type="entry name" value="Glyco_trans_28_C"/>
</dbReference>
<dbReference type="InterPro" id="IPR004276">
    <property type="entry name" value="GlycoTrans_28_N"/>
</dbReference>
<dbReference type="NCBIfam" id="TIGR01133">
    <property type="entry name" value="murG"/>
    <property type="match status" value="1"/>
</dbReference>
<dbReference type="PANTHER" id="PTHR21015:SF22">
    <property type="entry name" value="GLYCOSYLTRANSFERASE"/>
    <property type="match status" value="1"/>
</dbReference>
<dbReference type="PANTHER" id="PTHR21015">
    <property type="entry name" value="UDP-N-ACETYLGLUCOSAMINE--N-ACETYLMURAMYL-(PENTAPEPTIDE) PYROPHOSPHORYL-UNDECAPRENOL N-ACETYLGLUCOSAMINE TRANSFERASE 1"/>
    <property type="match status" value="1"/>
</dbReference>
<dbReference type="Pfam" id="PF04101">
    <property type="entry name" value="Glyco_tran_28_C"/>
    <property type="match status" value="1"/>
</dbReference>
<dbReference type="Pfam" id="PF03033">
    <property type="entry name" value="Glyco_transf_28"/>
    <property type="match status" value="1"/>
</dbReference>
<dbReference type="SUPFAM" id="SSF53756">
    <property type="entry name" value="UDP-Glycosyltransferase/glycogen phosphorylase"/>
    <property type="match status" value="1"/>
</dbReference>
<name>MURG_PSET1</name>
<organism>
    <name type="scientific">Pseudoalteromonas translucida (strain TAC 125)</name>
    <dbReference type="NCBI Taxonomy" id="326442"/>
    <lineage>
        <taxon>Bacteria</taxon>
        <taxon>Pseudomonadati</taxon>
        <taxon>Pseudomonadota</taxon>
        <taxon>Gammaproteobacteria</taxon>
        <taxon>Alteromonadales</taxon>
        <taxon>Pseudoalteromonadaceae</taxon>
        <taxon>Pseudoalteromonas</taxon>
    </lineage>
</organism>